<keyword id="KW-0229">DNA integration</keyword>
<keyword id="KW-0230">DNA invertase</keyword>
<keyword id="KW-0233">DNA recombination</keyword>
<keyword id="KW-0238">DNA-binding</keyword>
<keyword id="KW-0614">Plasmid</keyword>
<keyword id="KW-1185">Reference proteome</keyword>
<keyword id="KW-0814">Transposable element</keyword>
<keyword id="KW-0815">Transposition</keyword>
<feature type="chain" id="PRO_0000196387" description="Integrase-like protein y4lS">
    <location>
        <begin position="1"/>
        <end position="183"/>
    </location>
</feature>
<feature type="domain" description="Resolvase/invertase-type recombinase catalytic" evidence="1">
    <location>
        <begin position="2"/>
        <end position="136"/>
    </location>
</feature>
<feature type="site" description="Ancestral active site Ser">
    <location>
        <position position="10"/>
    </location>
</feature>
<organism>
    <name type="scientific">Sinorhizobium fredii (strain NBRC 101917 / NGR234)</name>
    <dbReference type="NCBI Taxonomy" id="394"/>
    <lineage>
        <taxon>Bacteria</taxon>
        <taxon>Pseudomonadati</taxon>
        <taxon>Pseudomonadota</taxon>
        <taxon>Alphaproteobacteria</taxon>
        <taxon>Hyphomicrobiales</taxon>
        <taxon>Rhizobiaceae</taxon>
        <taxon>Sinorhizobium/Ensifer group</taxon>
        <taxon>Sinorhizobium</taxon>
    </lineage>
</organism>
<dbReference type="EMBL" id="U00090">
    <property type="protein sequence ID" value="AAB92461.1"/>
    <property type="molecule type" value="Genomic_DNA"/>
</dbReference>
<dbReference type="RefSeq" id="NP_443966.1">
    <property type="nucleotide sequence ID" value="NC_000914.2"/>
</dbReference>
<dbReference type="RefSeq" id="WP_010875284.1">
    <property type="nucleotide sequence ID" value="NC_000914.2"/>
</dbReference>
<dbReference type="SMR" id="P55559"/>
<dbReference type="KEGG" id="rhi:NGR_a02590"/>
<dbReference type="PATRIC" id="fig|394.7.peg.274"/>
<dbReference type="eggNOG" id="COG1961">
    <property type="taxonomic scope" value="Bacteria"/>
</dbReference>
<dbReference type="HOGENOM" id="CLU_010686_8_3_5"/>
<dbReference type="OrthoDB" id="9800103at2"/>
<dbReference type="Proteomes" id="UP000001054">
    <property type="component" value="Plasmid pNGR234a"/>
</dbReference>
<dbReference type="GO" id="GO:0003677">
    <property type="term" value="F:DNA binding"/>
    <property type="evidence" value="ECO:0007669"/>
    <property type="project" value="UniProtKB-KW"/>
</dbReference>
<dbReference type="GO" id="GO:0000150">
    <property type="term" value="F:DNA strand exchange activity"/>
    <property type="evidence" value="ECO:0007669"/>
    <property type="project" value="UniProtKB-KW"/>
</dbReference>
<dbReference type="GO" id="GO:0015074">
    <property type="term" value="P:DNA integration"/>
    <property type="evidence" value="ECO:0007669"/>
    <property type="project" value="UniProtKB-KW"/>
</dbReference>
<dbReference type="GO" id="GO:0032196">
    <property type="term" value="P:transposition"/>
    <property type="evidence" value="ECO:0007669"/>
    <property type="project" value="UniProtKB-KW"/>
</dbReference>
<dbReference type="CDD" id="cd03768">
    <property type="entry name" value="SR_ResInv"/>
    <property type="match status" value="1"/>
</dbReference>
<dbReference type="Gene3D" id="1.10.10.60">
    <property type="entry name" value="Homeodomain-like"/>
    <property type="match status" value="1"/>
</dbReference>
<dbReference type="Gene3D" id="3.40.50.1390">
    <property type="entry name" value="Resolvase, N-terminal catalytic domain"/>
    <property type="match status" value="1"/>
</dbReference>
<dbReference type="InterPro" id="IPR009057">
    <property type="entry name" value="Homeodomain-like_sf"/>
</dbReference>
<dbReference type="InterPro" id="IPR006118">
    <property type="entry name" value="Recombinase_CS"/>
</dbReference>
<dbReference type="InterPro" id="IPR006119">
    <property type="entry name" value="Resolv_N"/>
</dbReference>
<dbReference type="InterPro" id="IPR036162">
    <property type="entry name" value="Resolvase-like_N_sf"/>
</dbReference>
<dbReference type="InterPro" id="IPR006120">
    <property type="entry name" value="Resolvase_HTH_dom"/>
</dbReference>
<dbReference type="InterPro" id="IPR050639">
    <property type="entry name" value="SSR_resolvase"/>
</dbReference>
<dbReference type="PANTHER" id="PTHR30461">
    <property type="entry name" value="DNA-INVERTASE FROM LAMBDOID PROPHAGE"/>
    <property type="match status" value="1"/>
</dbReference>
<dbReference type="PANTHER" id="PTHR30461:SF26">
    <property type="entry name" value="RESOLVASE HOMOLOG YNEB"/>
    <property type="match status" value="1"/>
</dbReference>
<dbReference type="Pfam" id="PF02796">
    <property type="entry name" value="HTH_7"/>
    <property type="match status" value="1"/>
</dbReference>
<dbReference type="Pfam" id="PF00239">
    <property type="entry name" value="Resolvase"/>
    <property type="match status" value="1"/>
</dbReference>
<dbReference type="SMART" id="SM00857">
    <property type="entry name" value="Resolvase"/>
    <property type="match status" value="1"/>
</dbReference>
<dbReference type="SUPFAM" id="SSF46689">
    <property type="entry name" value="Homeodomain-like"/>
    <property type="match status" value="1"/>
</dbReference>
<dbReference type="SUPFAM" id="SSF53041">
    <property type="entry name" value="Resolvase-like"/>
    <property type="match status" value="1"/>
</dbReference>
<dbReference type="PROSITE" id="PS00398">
    <property type="entry name" value="RECOMBINASES_2"/>
    <property type="match status" value="1"/>
</dbReference>
<dbReference type="PROSITE" id="PS51736">
    <property type="entry name" value="RECOMBINASES_3"/>
    <property type="match status" value="1"/>
</dbReference>
<proteinExistence type="inferred from homology"/>
<name>Y4LS_SINFN</name>
<accession>P55559</accession>
<gene>
    <name type="ordered locus">NGR_a02590</name>
    <name type="ORF">y4lS</name>
</gene>
<evidence type="ECO:0000255" key="1">
    <source>
        <dbReference type="PROSITE-ProRule" id="PRU01072"/>
    </source>
</evidence>
<evidence type="ECO:0000305" key="2"/>
<reference key="1">
    <citation type="journal article" date="1997" name="Nature">
        <title>Molecular basis of symbiosis between Rhizobium and legumes.</title>
        <authorList>
            <person name="Freiberg C.A."/>
            <person name="Fellay R."/>
            <person name="Bairoch A."/>
            <person name="Broughton W.J."/>
            <person name="Rosenthal A."/>
            <person name="Perret X."/>
        </authorList>
    </citation>
    <scope>NUCLEOTIDE SEQUENCE [LARGE SCALE GENOMIC DNA]</scope>
    <source>
        <strain>NBRC 101917 / NGR234</strain>
    </source>
</reference>
<reference key="2">
    <citation type="journal article" date="2009" name="Appl. Environ. Microbiol.">
        <title>Rhizobium sp. strain NGR234 possesses a remarkable number of secretion systems.</title>
        <authorList>
            <person name="Schmeisser C."/>
            <person name="Liesegang H."/>
            <person name="Krysciak D."/>
            <person name="Bakkou N."/>
            <person name="Le Quere A."/>
            <person name="Wollherr A."/>
            <person name="Heinemeyer I."/>
            <person name="Morgenstern B."/>
            <person name="Pommerening-Roeser A."/>
            <person name="Flores M."/>
            <person name="Palacios R."/>
            <person name="Brenner S."/>
            <person name="Gottschalk G."/>
            <person name="Schmitz R.A."/>
            <person name="Broughton W.J."/>
            <person name="Perret X."/>
            <person name="Strittmatter A.W."/>
            <person name="Streit W.R."/>
        </authorList>
    </citation>
    <scope>NUCLEOTIDE SEQUENCE [LARGE SCALE GENOMIC DNA]</scope>
    <source>
        <strain>NBRC 101917 / NGR234</strain>
    </source>
</reference>
<geneLocation type="plasmid">
    <name>sym pNGR234a</name>
</geneLocation>
<comment type="similarity">
    <text evidence="2">Belongs to the site-specific recombinase resolvase family.</text>
</comment>
<comment type="caution">
    <text evidence="2">Lacks the conserved serine which acts in the transient covalent linkage to DNA during strand cleavage and rejoining.</text>
</comment>
<sequence length="183" mass="20180">MARIGYARTFTTDQNLAAQIAALRNAGCEVIREEQKSGASLEGRPQLMTILDFIHAGETFVITRIDRLARSLRDLQVIVDRLKAKGAHLVATEQPADTSTAAGKAFFDMLGVFAGFETNLRRERQAEGIAAARKRGIYKGRPPKIDRAEILLRLQQGQGPSKIARDLGISRGTVYQVRKGVFE</sequence>
<protein>
    <recommendedName>
        <fullName>Integrase-like protein y4lS</fullName>
    </recommendedName>
</protein>